<keyword id="KW-0028">Amino-acid biosynthesis</keyword>
<keyword id="KW-0032">Aminotransferase</keyword>
<keyword id="KW-0368">Histidine biosynthesis</keyword>
<keyword id="KW-0663">Pyridoxal phosphate</keyword>
<keyword id="KW-0808">Transferase</keyword>
<proteinExistence type="inferred from homology"/>
<comment type="catalytic activity">
    <reaction evidence="1">
        <text>L-histidinol phosphate + 2-oxoglutarate = 3-(imidazol-4-yl)-2-oxopropyl phosphate + L-glutamate</text>
        <dbReference type="Rhea" id="RHEA:23744"/>
        <dbReference type="ChEBI" id="CHEBI:16810"/>
        <dbReference type="ChEBI" id="CHEBI:29985"/>
        <dbReference type="ChEBI" id="CHEBI:57766"/>
        <dbReference type="ChEBI" id="CHEBI:57980"/>
        <dbReference type="EC" id="2.6.1.9"/>
    </reaction>
</comment>
<comment type="cofactor">
    <cofactor evidence="1">
        <name>pyridoxal 5'-phosphate</name>
        <dbReference type="ChEBI" id="CHEBI:597326"/>
    </cofactor>
</comment>
<comment type="pathway">
    <text evidence="1">Amino-acid biosynthesis; L-histidine biosynthesis; L-histidine from 5-phospho-alpha-D-ribose 1-diphosphate: step 7/9.</text>
</comment>
<comment type="subunit">
    <text evidence="1">Homodimer.</text>
</comment>
<comment type="similarity">
    <text evidence="1">Belongs to the class-II pyridoxal-phosphate-dependent aminotransferase family. Histidinol-phosphate aminotransferase subfamily.</text>
</comment>
<sequence>MAEQGKQGGKVPFGPDYVRAISPYIAGKPISEVAREFGLDEAGIVKLASNENPLGMPESAKHAAAAAIAELGRYPDSNGFELKAALSTKLGVPQDWLTLGNGSNDILELAAHALVTPGQSIVYAEYSFAVYALATQEIGARAIVVKARDYGHDLDAMAAAITSDTRLVFIANPNNPTGTFVPAAALETFLAKVPAEVVVVLDEAYNEYLDDDQQYDSVAWVRRYPNLLVSRTFSKAYGLAGLRIGYAVAQPELTDLLNRIRQPFNVNSVAQAAAVAALGDTAFLQRSAELNRAGKAQLVEAFSRLGLEFVASSGNFVLVRVGDDDDAGARVNVALLRQGVIVRPVGNYGMPRWLRVTIGLPDENAAFIAALERALK</sequence>
<feature type="chain" id="PRO_0000153428" description="Histidinol-phosphate aminotransferase 1">
    <location>
        <begin position="1"/>
        <end position="376"/>
    </location>
</feature>
<feature type="modified residue" description="N6-(pyridoxal phosphate)lysine" evidence="1">
    <location>
        <position position="235"/>
    </location>
</feature>
<evidence type="ECO:0000255" key="1">
    <source>
        <dbReference type="HAMAP-Rule" id="MF_01023"/>
    </source>
</evidence>
<gene>
    <name evidence="1" type="primary">hisC1</name>
    <name type="ordered locus">Reut_A2574</name>
</gene>
<name>HIS81_CUPPJ</name>
<organism>
    <name type="scientific">Cupriavidus pinatubonensis (strain JMP 134 / LMG 1197)</name>
    <name type="common">Cupriavidus necator (strain JMP 134)</name>
    <dbReference type="NCBI Taxonomy" id="264198"/>
    <lineage>
        <taxon>Bacteria</taxon>
        <taxon>Pseudomonadati</taxon>
        <taxon>Pseudomonadota</taxon>
        <taxon>Betaproteobacteria</taxon>
        <taxon>Burkholderiales</taxon>
        <taxon>Burkholderiaceae</taxon>
        <taxon>Cupriavidus</taxon>
    </lineage>
</organism>
<accession>Q46Y48</accession>
<dbReference type="EC" id="2.6.1.9" evidence="1"/>
<dbReference type="EMBL" id="CP000090">
    <property type="protein sequence ID" value="AAZ61935.1"/>
    <property type="molecule type" value="Genomic_DNA"/>
</dbReference>
<dbReference type="SMR" id="Q46Y48"/>
<dbReference type="STRING" id="264198.Reut_A2574"/>
<dbReference type="KEGG" id="reu:Reut_A2574"/>
<dbReference type="eggNOG" id="COG0079">
    <property type="taxonomic scope" value="Bacteria"/>
</dbReference>
<dbReference type="HOGENOM" id="CLU_017584_3_3_4"/>
<dbReference type="OrthoDB" id="9813612at2"/>
<dbReference type="UniPathway" id="UPA00031">
    <property type="reaction ID" value="UER00012"/>
</dbReference>
<dbReference type="GO" id="GO:0004400">
    <property type="term" value="F:histidinol-phosphate transaminase activity"/>
    <property type="evidence" value="ECO:0007669"/>
    <property type="project" value="UniProtKB-UniRule"/>
</dbReference>
<dbReference type="GO" id="GO:0030170">
    <property type="term" value="F:pyridoxal phosphate binding"/>
    <property type="evidence" value="ECO:0007669"/>
    <property type="project" value="InterPro"/>
</dbReference>
<dbReference type="GO" id="GO:0000105">
    <property type="term" value="P:L-histidine biosynthetic process"/>
    <property type="evidence" value="ECO:0007669"/>
    <property type="project" value="UniProtKB-UniRule"/>
</dbReference>
<dbReference type="CDD" id="cd00609">
    <property type="entry name" value="AAT_like"/>
    <property type="match status" value="1"/>
</dbReference>
<dbReference type="Gene3D" id="3.90.1150.10">
    <property type="entry name" value="Aspartate Aminotransferase, domain 1"/>
    <property type="match status" value="1"/>
</dbReference>
<dbReference type="Gene3D" id="3.40.640.10">
    <property type="entry name" value="Type I PLP-dependent aspartate aminotransferase-like (Major domain)"/>
    <property type="match status" value="1"/>
</dbReference>
<dbReference type="HAMAP" id="MF_01023">
    <property type="entry name" value="HisC_aminotrans_2"/>
    <property type="match status" value="1"/>
</dbReference>
<dbReference type="InterPro" id="IPR001917">
    <property type="entry name" value="Aminotrans_II_pyridoxalP_BS"/>
</dbReference>
<dbReference type="InterPro" id="IPR004839">
    <property type="entry name" value="Aminotransferase_I/II_large"/>
</dbReference>
<dbReference type="InterPro" id="IPR005861">
    <property type="entry name" value="HisP_aminotrans"/>
</dbReference>
<dbReference type="InterPro" id="IPR050106">
    <property type="entry name" value="HistidinolP_aminotransfase"/>
</dbReference>
<dbReference type="InterPro" id="IPR015424">
    <property type="entry name" value="PyrdxlP-dep_Trfase"/>
</dbReference>
<dbReference type="InterPro" id="IPR015421">
    <property type="entry name" value="PyrdxlP-dep_Trfase_major"/>
</dbReference>
<dbReference type="InterPro" id="IPR015422">
    <property type="entry name" value="PyrdxlP-dep_Trfase_small"/>
</dbReference>
<dbReference type="NCBIfam" id="TIGR01141">
    <property type="entry name" value="hisC"/>
    <property type="match status" value="1"/>
</dbReference>
<dbReference type="PANTHER" id="PTHR43643:SF3">
    <property type="entry name" value="HISTIDINOL-PHOSPHATE AMINOTRANSFERASE"/>
    <property type="match status" value="1"/>
</dbReference>
<dbReference type="PANTHER" id="PTHR43643">
    <property type="entry name" value="HISTIDINOL-PHOSPHATE AMINOTRANSFERASE 2"/>
    <property type="match status" value="1"/>
</dbReference>
<dbReference type="Pfam" id="PF00155">
    <property type="entry name" value="Aminotran_1_2"/>
    <property type="match status" value="1"/>
</dbReference>
<dbReference type="SUPFAM" id="SSF53383">
    <property type="entry name" value="PLP-dependent transferases"/>
    <property type="match status" value="1"/>
</dbReference>
<dbReference type="PROSITE" id="PS00599">
    <property type="entry name" value="AA_TRANSFER_CLASS_2"/>
    <property type="match status" value="1"/>
</dbReference>
<protein>
    <recommendedName>
        <fullName evidence="1">Histidinol-phosphate aminotransferase 1</fullName>
        <ecNumber evidence="1">2.6.1.9</ecNumber>
    </recommendedName>
    <alternativeName>
        <fullName evidence="1">Imidazole acetol-phosphate transaminase 1</fullName>
    </alternativeName>
</protein>
<reference key="1">
    <citation type="journal article" date="2010" name="PLoS ONE">
        <title>The complete multipartite genome sequence of Cupriavidus necator JMP134, a versatile pollutant degrader.</title>
        <authorList>
            <person name="Lykidis A."/>
            <person name="Perez-Pantoja D."/>
            <person name="Ledger T."/>
            <person name="Mavromatis K."/>
            <person name="Anderson I.J."/>
            <person name="Ivanova N.N."/>
            <person name="Hooper S.D."/>
            <person name="Lapidus A."/>
            <person name="Lucas S."/>
            <person name="Gonzalez B."/>
            <person name="Kyrpides N.C."/>
        </authorList>
    </citation>
    <scope>NUCLEOTIDE SEQUENCE [LARGE SCALE GENOMIC DNA]</scope>
    <source>
        <strain>JMP134 / LMG 1197</strain>
    </source>
</reference>